<organism>
    <name type="scientific">Bacillus subtilis (strain 168)</name>
    <dbReference type="NCBI Taxonomy" id="224308"/>
    <lineage>
        <taxon>Bacteria</taxon>
        <taxon>Bacillati</taxon>
        <taxon>Bacillota</taxon>
        <taxon>Bacilli</taxon>
        <taxon>Bacillales</taxon>
        <taxon>Bacillaceae</taxon>
        <taxon>Bacillus</taxon>
    </lineage>
</organism>
<sequence length="223" mass="25296">MSGQILWGIMPYIVLTIFIGGHIYRYQHDQFGWTAKSSELLEKKKLAAGSTLFHWGLLCVVGGHVMGILIPEGVYASLGISEHMYHKMAIGAGLPAGIAACTGLVILTYRRLFDKRIRKTSSPSDILTLLLLLFMMLSGVAATFLNIDSKGFDYRTTVGPWFREIVLFRPDASLMESVPLWFKFHIVIGYVVFILWPFTRLVHVFSLPLKYLTRSYVVYRKRS</sequence>
<evidence type="ECO:0000250" key="1"/>
<evidence type="ECO:0000250" key="2">
    <source>
        <dbReference type="UniProtKB" id="P11350"/>
    </source>
</evidence>
<keyword id="KW-1003">Cell membrane</keyword>
<keyword id="KW-0249">Electron transport</keyword>
<keyword id="KW-0349">Heme</keyword>
<keyword id="KW-0408">Iron</keyword>
<keyword id="KW-0472">Membrane</keyword>
<keyword id="KW-0479">Metal-binding</keyword>
<keyword id="KW-0534">Nitrate assimilation</keyword>
<keyword id="KW-0560">Oxidoreductase</keyword>
<keyword id="KW-1185">Reference proteome</keyword>
<keyword id="KW-0812">Transmembrane</keyword>
<keyword id="KW-1133">Transmembrane helix</keyword>
<keyword id="KW-0813">Transport</keyword>
<gene>
    <name type="primary">narI</name>
    <name type="ordered locus">BSU37250</name>
</gene>
<dbReference type="EC" id="1.7.5.1"/>
<dbReference type="EMBL" id="Z49884">
    <property type="protein sequence ID" value="CAA90048.1"/>
    <property type="molecule type" value="Genomic_DNA"/>
</dbReference>
<dbReference type="EMBL" id="AL009126">
    <property type="protein sequence ID" value="CAB15753.1"/>
    <property type="molecule type" value="Genomic_DNA"/>
</dbReference>
<dbReference type="EMBL" id="X85014">
    <property type="protein sequence ID" value="CAA59374.1"/>
    <property type="molecule type" value="Genomic_DNA"/>
</dbReference>
<dbReference type="EMBL" id="X91819">
    <property type="protein sequence ID" value="CAA62929.1"/>
    <property type="molecule type" value="Genomic_DNA"/>
</dbReference>
<dbReference type="PIR" id="S60088">
    <property type="entry name" value="S60088"/>
</dbReference>
<dbReference type="RefSeq" id="NP_391606.1">
    <property type="nucleotide sequence ID" value="NC_000964.3"/>
</dbReference>
<dbReference type="RefSeq" id="WP_003242665.1">
    <property type="nucleotide sequence ID" value="NZ_OZ025638.1"/>
</dbReference>
<dbReference type="SMR" id="P42177"/>
<dbReference type="FunCoup" id="P42177">
    <property type="interactions" value="139"/>
</dbReference>
<dbReference type="STRING" id="224308.BSU37250"/>
<dbReference type="PaxDb" id="224308-BSU37250"/>
<dbReference type="EnsemblBacteria" id="CAB15753">
    <property type="protein sequence ID" value="CAB15753"/>
    <property type="gene ID" value="BSU_37250"/>
</dbReference>
<dbReference type="GeneID" id="938454"/>
<dbReference type="KEGG" id="bsu:BSU37250"/>
<dbReference type="PATRIC" id="fig|224308.179.peg.4036"/>
<dbReference type="eggNOG" id="COG2181">
    <property type="taxonomic scope" value="Bacteria"/>
</dbReference>
<dbReference type="InParanoid" id="P42177"/>
<dbReference type="OrthoDB" id="9788113at2"/>
<dbReference type="PhylomeDB" id="P42177"/>
<dbReference type="BioCyc" id="BSUB:BSU37250-MONOMER"/>
<dbReference type="Proteomes" id="UP000001570">
    <property type="component" value="Chromosome"/>
</dbReference>
<dbReference type="GO" id="GO:0009325">
    <property type="term" value="C:nitrate reductase complex"/>
    <property type="evidence" value="ECO:0007669"/>
    <property type="project" value="InterPro"/>
</dbReference>
<dbReference type="GO" id="GO:0005886">
    <property type="term" value="C:plasma membrane"/>
    <property type="evidence" value="ECO:0007669"/>
    <property type="project" value="UniProtKB-SubCell"/>
</dbReference>
<dbReference type="GO" id="GO:0009055">
    <property type="term" value="F:electron transfer activity"/>
    <property type="evidence" value="ECO:0000318"/>
    <property type="project" value="GO_Central"/>
</dbReference>
<dbReference type="GO" id="GO:0020037">
    <property type="term" value="F:heme binding"/>
    <property type="evidence" value="ECO:0000318"/>
    <property type="project" value="GO_Central"/>
</dbReference>
<dbReference type="GO" id="GO:0046872">
    <property type="term" value="F:metal ion binding"/>
    <property type="evidence" value="ECO:0007669"/>
    <property type="project" value="UniProtKB-KW"/>
</dbReference>
<dbReference type="GO" id="GO:0160182">
    <property type="term" value="F:nitrate reductase (quinone) activity"/>
    <property type="evidence" value="ECO:0007669"/>
    <property type="project" value="UniProtKB-EC"/>
</dbReference>
<dbReference type="GO" id="GO:0008940">
    <property type="term" value="F:nitrate reductase activity"/>
    <property type="evidence" value="ECO:0000318"/>
    <property type="project" value="GO_Central"/>
</dbReference>
<dbReference type="GO" id="GO:0019645">
    <property type="term" value="P:anaerobic electron transport chain"/>
    <property type="evidence" value="ECO:0000318"/>
    <property type="project" value="GO_Central"/>
</dbReference>
<dbReference type="GO" id="GO:0042128">
    <property type="term" value="P:nitrate assimilation"/>
    <property type="evidence" value="ECO:0007669"/>
    <property type="project" value="UniProtKB-KW"/>
</dbReference>
<dbReference type="FunFam" id="1.20.950.20:FF:000001">
    <property type="entry name" value="Respiratory nitrate reductase subunit gamma"/>
    <property type="match status" value="1"/>
</dbReference>
<dbReference type="Gene3D" id="1.20.950.20">
    <property type="entry name" value="Transmembrane di-heme cytochromes, Chain C"/>
    <property type="match status" value="1"/>
</dbReference>
<dbReference type="InterPro" id="IPR051936">
    <property type="entry name" value="Heme-iron_electron_transfer"/>
</dbReference>
<dbReference type="InterPro" id="IPR023234">
    <property type="entry name" value="NarG-like_domain"/>
</dbReference>
<dbReference type="InterPro" id="IPR036197">
    <property type="entry name" value="NarG-like_sf"/>
</dbReference>
<dbReference type="InterPro" id="IPR003816">
    <property type="entry name" value="Nitrate_red_gam"/>
</dbReference>
<dbReference type="NCBIfam" id="TIGR00351">
    <property type="entry name" value="narI"/>
    <property type="match status" value="1"/>
</dbReference>
<dbReference type="PANTHER" id="PTHR30598">
    <property type="entry name" value="NITRATE REDUCTASE PRIVATE CHAPERONE, REDOX ENZYME MATURATION PROTEIN REMP FAMILY"/>
    <property type="match status" value="1"/>
</dbReference>
<dbReference type="PANTHER" id="PTHR30598:SF3">
    <property type="entry name" value="RESPIRATORY NITRATE REDUCTASE 1 GAMMA CHAIN"/>
    <property type="match status" value="1"/>
</dbReference>
<dbReference type="Pfam" id="PF02665">
    <property type="entry name" value="Nitrate_red_gam"/>
    <property type="match status" value="1"/>
</dbReference>
<dbReference type="SUPFAM" id="SSF103501">
    <property type="entry name" value="Respiratory nitrate reductase 1 gamma chain"/>
    <property type="match status" value="1"/>
</dbReference>
<name>NARI_BACSU</name>
<reference key="1">
    <citation type="journal article" date="1995" name="EMBO J.">
        <title>Anaerobic transcription activation in Bacillus subtilis: identification of distinct FNR-dependent and -independent regulatory mechanisms.</title>
        <authorList>
            <person name="Cruz Ramos H."/>
            <person name="Boursier L."/>
            <person name="Moszer I."/>
            <person name="Kunst F."/>
            <person name="Danchin A."/>
            <person name="Glaser P."/>
        </authorList>
    </citation>
    <scope>NUCLEOTIDE SEQUENCE [GENOMIC DNA]</scope>
</reference>
<reference key="2">
    <citation type="journal article" date="1997" name="Microbiology">
        <title>The Bacillus subtilis genome from gerBC (311 degrees) to licR (334 degrees).</title>
        <authorList>
            <person name="Presecan E."/>
            <person name="Moszer I."/>
            <person name="Boursier L."/>
            <person name="Cruz Ramos H."/>
            <person name="De La Fuente V."/>
            <person name="Hullo M.-F."/>
            <person name="Lelong C."/>
            <person name="Schleich S."/>
            <person name="Sekowska A."/>
            <person name="Song B.H."/>
            <person name="Villani G."/>
            <person name="Kunst F."/>
            <person name="Danchin A."/>
            <person name="Glaser P."/>
        </authorList>
    </citation>
    <scope>NUCLEOTIDE SEQUENCE [GENOMIC DNA]</scope>
    <source>
        <strain>168</strain>
    </source>
</reference>
<reference key="3">
    <citation type="journal article" date="1997" name="Nature">
        <title>The complete genome sequence of the Gram-positive bacterium Bacillus subtilis.</title>
        <authorList>
            <person name="Kunst F."/>
            <person name="Ogasawara N."/>
            <person name="Moszer I."/>
            <person name="Albertini A.M."/>
            <person name="Alloni G."/>
            <person name="Azevedo V."/>
            <person name="Bertero M.G."/>
            <person name="Bessieres P."/>
            <person name="Bolotin A."/>
            <person name="Borchert S."/>
            <person name="Borriss R."/>
            <person name="Boursier L."/>
            <person name="Brans A."/>
            <person name="Braun M."/>
            <person name="Brignell S.C."/>
            <person name="Bron S."/>
            <person name="Brouillet S."/>
            <person name="Bruschi C.V."/>
            <person name="Caldwell B."/>
            <person name="Capuano V."/>
            <person name="Carter N.M."/>
            <person name="Choi S.-K."/>
            <person name="Codani J.-J."/>
            <person name="Connerton I.F."/>
            <person name="Cummings N.J."/>
            <person name="Daniel R.A."/>
            <person name="Denizot F."/>
            <person name="Devine K.M."/>
            <person name="Duesterhoeft A."/>
            <person name="Ehrlich S.D."/>
            <person name="Emmerson P.T."/>
            <person name="Entian K.-D."/>
            <person name="Errington J."/>
            <person name="Fabret C."/>
            <person name="Ferrari E."/>
            <person name="Foulger D."/>
            <person name="Fritz C."/>
            <person name="Fujita M."/>
            <person name="Fujita Y."/>
            <person name="Fuma S."/>
            <person name="Galizzi A."/>
            <person name="Galleron N."/>
            <person name="Ghim S.-Y."/>
            <person name="Glaser P."/>
            <person name="Goffeau A."/>
            <person name="Golightly E.J."/>
            <person name="Grandi G."/>
            <person name="Guiseppi G."/>
            <person name="Guy B.J."/>
            <person name="Haga K."/>
            <person name="Haiech J."/>
            <person name="Harwood C.R."/>
            <person name="Henaut A."/>
            <person name="Hilbert H."/>
            <person name="Holsappel S."/>
            <person name="Hosono S."/>
            <person name="Hullo M.-F."/>
            <person name="Itaya M."/>
            <person name="Jones L.-M."/>
            <person name="Joris B."/>
            <person name="Karamata D."/>
            <person name="Kasahara Y."/>
            <person name="Klaerr-Blanchard M."/>
            <person name="Klein C."/>
            <person name="Kobayashi Y."/>
            <person name="Koetter P."/>
            <person name="Koningstein G."/>
            <person name="Krogh S."/>
            <person name="Kumano M."/>
            <person name="Kurita K."/>
            <person name="Lapidus A."/>
            <person name="Lardinois S."/>
            <person name="Lauber J."/>
            <person name="Lazarevic V."/>
            <person name="Lee S.-M."/>
            <person name="Levine A."/>
            <person name="Liu H."/>
            <person name="Masuda S."/>
            <person name="Mauel C."/>
            <person name="Medigue C."/>
            <person name="Medina N."/>
            <person name="Mellado R.P."/>
            <person name="Mizuno M."/>
            <person name="Moestl D."/>
            <person name="Nakai S."/>
            <person name="Noback M."/>
            <person name="Noone D."/>
            <person name="O'Reilly M."/>
            <person name="Ogawa K."/>
            <person name="Ogiwara A."/>
            <person name="Oudega B."/>
            <person name="Park S.-H."/>
            <person name="Parro V."/>
            <person name="Pohl T.M."/>
            <person name="Portetelle D."/>
            <person name="Porwollik S."/>
            <person name="Prescott A.M."/>
            <person name="Presecan E."/>
            <person name="Pujic P."/>
            <person name="Purnelle B."/>
            <person name="Rapoport G."/>
            <person name="Rey M."/>
            <person name="Reynolds S."/>
            <person name="Rieger M."/>
            <person name="Rivolta C."/>
            <person name="Rocha E."/>
            <person name="Roche B."/>
            <person name="Rose M."/>
            <person name="Sadaie Y."/>
            <person name="Sato T."/>
            <person name="Scanlan E."/>
            <person name="Schleich S."/>
            <person name="Schroeter R."/>
            <person name="Scoffone F."/>
            <person name="Sekiguchi J."/>
            <person name="Sekowska A."/>
            <person name="Seror S.J."/>
            <person name="Serror P."/>
            <person name="Shin B.-S."/>
            <person name="Soldo B."/>
            <person name="Sorokin A."/>
            <person name="Tacconi E."/>
            <person name="Takagi T."/>
            <person name="Takahashi H."/>
            <person name="Takemaru K."/>
            <person name="Takeuchi M."/>
            <person name="Tamakoshi A."/>
            <person name="Tanaka T."/>
            <person name="Terpstra P."/>
            <person name="Tognoni A."/>
            <person name="Tosato V."/>
            <person name="Uchiyama S."/>
            <person name="Vandenbol M."/>
            <person name="Vannier F."/>
            <person name="Vassarotti A."/>
            <person name="Viari A."/>
            <person name="Wambutt R."/>
            <person name="Wedler E."/>
            <person name="Wedler H."/>
            <person name="Weitzenegger T."/>
            <person name="Winters P."/>
            <person name="Wipat A."/>
            <person name="Yamamoto H."/>
            <person name="Yamane K."/>
            <person name="Yasumoto K."/>
            <person name="Yata K."/>
            <person name="Yoshida K."/>
            <person name="Yoshikawa H.-F."/>
            <person name="Zumstein E."/>
            <person name="Yoshikawa H."/>
            <person name="Danchin A."/>
        </authorList>
    </citation>
    <scope>NUCLEOTIDE SEQUENCE [LARGE SCALE GENOMIC DNA]</scope>
    <source>
        <strain>168</strain>
    </source>
</reference>
<reference key="4">
    <citation type="journal article" date="1995" name="FEMS Microbiol. Lett.">
        <title>The anaerobic life of Bacillus subtilis: cloning of the genes encoding the respiratory nitrate reductase system.</title>
        <authorList>
            <person name="Hoffmann T."/>
            <person name="Troup B."/>
            <person name="Szabo A."/>
            <person name="Hungerer C."/>
            <person name="Jahn D."/>
        </authorList>
    </citation>
    <scope>NUCLEOTIDE SEQUENCE [GENOMIC DNA] OF 1-160</scope>
    <source>
        <strain>168 / JH642</strain>
    </source>
</reference>
<feature type="chain" id="PRO_0000096722" description="Nitrate reductase gamma chain">
    <location>
        <begin position="1"/>
        <end position="223"/>
    </location>
</feature>
<feature type="transmembrane region" description="Helical; Name=1" evidence="1">
    <location>
        <begin position="2"/>
        <end position="27"/>
    </location>
</feature>
<feature type="topological domain" description="Cytoplasmic" evidence="1">
    <location>
        <begin position="28"/>
        <end position="45"/>
    </location>
</feature>
<feature type="transmembrane region" description="Helical; Name=2" evidence="1">
    <location>
        <begin position="46"/>
        <end position="68"/>
    </location>
</feature>
<feature type="topological domain" description="Extracellular" evidence="1">
    <location>
        <begin position="69"/>
        <end position="81"/>
    </location>
</feature>
<feature type="transmembrane region" description="Helical; Name=3" evidence="1">
    <location>
        <begin position="82"/>
        <end position="111"/>
    </location>
</feature>
<feature type="topological domain" description="Cytoplasmic" evidence="1">
    <location>
        <begin position="112"/>
        <end position="123"/>
    </location>
</feature>
<feature type="transmembrane region" description="Helical; Name=4" evidence="1">
    <location>
        <begin position="124"/>
        <end position="147"/>
    </location>
</feature>
<feature type="topological domain" description="Extracellular" evidence="1">
    <location>
        <begin position="148"/>
        <end position="180"/>
    </location>
</feature>
<feature type="transmembrane region" description="Helical; Name=5" evidence="1">
    <location>
        <begin position="181"/>
        <end position="196"/>
    </location>
</feature>
<feature type="topological domain" description="Cytoplasmic" evidence="1">
    <location>
        <begin position="197"/>
        <end position="223"/>
    </location>
</feature>
<feature type="binding site" description="axial binding residue" evidence="2">
    <location>
        <position position="54"/>
    </location>
    <ligand>
        <name>heme b</name>
        <dbReference type="ChEBI" id="CHEBI:60344"/>
        <label>1</label>
    </ligand>
    <ligandPart>
        <name>Fe</name>
        <dbReference type="ChEBI" id="CHEBI:18248"/>
    </ligandPart>
</feature>
<feature type="binding site" description="axial binding residue" evidence="2">
    <location>
        <position position="64"/>
    </location>
    <ligand>
        <name>heme b</name>
        <dbReference type="ChEBI" id="CHEBI:60344"/>
        <label>2</label>
    </ligand>
    <ligandPart>
        <name>Fe</name>
        <dbReference type="ChEBI" id="CHEBI:18248"/>
    </ligandPart>
</feature>
<feature type="binding site" description="axial binding residue" evidence="2">
    <location>
        <position position="185"/>
    </location>
    <ligand>
        <name>heme b</name>
        <dbReference type="ChEBI" id="CHEBI:60344"/>
        <label>2</label>
    </ligand>
    <ligandPart>
        <name>Fe</name>
        <dbReference type="ChEBI" id="CHEBI:18248"/>
    </ligandPart>
</feature>
<feature type="binding site" description="axial binding residue" evidence="2">
    <location>
        <position position="203"/>
    </location>
    <ligand>
        <name>heme b</name>
        <dbReference type="ChEBI" id="CHEBI:60344"/>
        <label>1</label>
    </ligand>
    <ligandPart>
        <name>Fe</name>
        <dbReference type="ChEBI" id="CHEBI:18248"/>
    </ligandPart>
</feature>
<protein>
    <recommendedName>
        <fullName>Nitrate reductase gamma chain</fullName>
        <ecNumber>1.7.5.1</ecNumber>
    </recommendedName>
</protein>
<comment type="function">
    <text>The gamma chain is a membrane-embedded heme-iron unit resembling cytochrome b, which transfers electrons from quinones to the beta subunit.</text>
</comment>
<comment type="catalytic activity">
    <reaction>
        <text>nitrate + a quinol = a quinone + nitrite + H2O</text>
        <dbReference type="Rhea" id="RHEA:56144"/>
        <dbReference type="ChEBI" id="CHEBI:15377"/>
        <dbReference type="ChEBI" id="CHEBI:16301"/>
        <dbReference type="ChEBI" id="CHEBI:17632"/>
        <dbReference type="ChEBI" id="CHEBI:24646"/>
        <dbReference type="ChEBI" id="CHEBI:132124"/>
        <dbReference type="EC" id="1.7.5.1"/>
    </reaction>
</comment>
<comment type="cofactor">
    <cofactor evidence="2">
        <name>heme</name>
        <dbReference type="ChEBI" id="CHEBI:30413"/>
    </cofactor>
    <text evidence="2">Binds 2 heme groups per subunit. Heme 1, called the proximal or heme Bp in, is located at the cytoplasmic interface, heme 2, called the distal or heme Bd, is located at the periplasmic interface. Electrons are transferred from the periplasmic to the cytoplasmic heme.</text>
</comment>
<comment type="subcellular location">
    <subcellularLocation>
        <location>Cell membrane</location>
        <topology>Multi-pass membrane protein</topology>
    </subcellularLocation>
</comment>
<accession>P42177</accession>
<proteinExistence type="inferred from homology"/>